<reference key="1">
    <citation type="journal article" date="2007" name="Nat. Biotechnol.">
        <title>Genome sequence of the lignocellulose-bioconverting and xylose-fermenting yeast Pichia stipitis.</title>
        <authorList>
            <person name="Jeffries T.W."/>
            <person name="Grigoriev I.V."/>
            <person name="Grimwood J."/>
            <person name="Laplaza J.M."/>
            <person name="Aerts A."/>
            <person name="Salamov A."/>
            <person name="Schmutz J."/>
            <person name="Lindquist E."/>
            <person name="Dehal P."/>
            <person name="Shapiro H."/>
            <person name="Jin Y.-S."/>
            <person name="Passoth V."/>
            <person name="Richardson P.M."/>
        </authorList>
    </citation>
    <scope>NUCLEOTIDE SEQUENCE [LARGE SCALE GENOMIC DNA]</scope>
    <source>
        <strain>ATCC 58785 / CBS 6054 / NBRC 10063 / NRRL Y-11545</strain>
    </source>
</reference>
<dbReference type="EMBL" id="CP000501">
    <property type="protein sequence ID" value="ABN68248.2"/>
    <property type="molecule type" value="Genomic_DNA"/>
</dbReference>
<dbReference type="RefSeq" id="XP_001386277.2">
    <property type="nucleotide sequence ID" value="XM_001386240.1"/>
</dbReference>
<dbReference type="SMR" id="A3LYY9"/>
<dbReference type="FunCoup" id="A3LYY9">
    <property type="interactions" value="239"/>
</dbReference>
<dbReference type="STRING" id="322104.A3LYY9"/>
<dbReference type="GeneID" id="4840525"/>
<dbReference type="KEGG" id="pic:PICST_90761"/>
<dbReference type="eggNOG" id="KOG3331">
    <property type="taxonomic scope" value="Eukaryota"/>
</dbReference>
<dbReference type="HOGENOM" id="CLU_872105_0_0_1"/>
<dbReference type="InParanoid" id="A3LYY9"/>
<dbReference type="OMA" id="IRTTMWR"/>
<dbReference type="OrthoDB" id="270763at2759"/>
<dbReference type="Proteomes" id="UP000002258">
    <property type="component" value="Chromosome 7"/>
</dbReference>
<dbReference type="GO" id="GO:0005762">
    <property type="term" value="C:mitochondrial large ribosomal subunit"/>
    <property type="evidence" value="ECO:0007669"/>
    <property type="project" value="TreeGrafter"/>
</dbReference>
<dbReference type="GO" id="GO:0003735">
    <property type="term" value="F:structural constituent of ribosome"/>
    <property type="evidence" value="ECO:0007669"/>
    <property type="project" value="InterPro"/>
</dbReference>
<dbReference type="GO" id="GO:0032543">
    <property type="term" value="P:mitochondrial translation"/>
    <property type="evidence" value="ECO:0007669"/>
    <property type="project" value="TreeGrafter"/>
</dbReference>
<dbReference type="Gene3D" id="6.10.140.1190">
    <property type="match status" value="1"/>
</dbReference>
<dbReference type="Gene3D" id="6.10.330.20">
    <property type="match status" value="1"/>
</dbReference>
<dbReference type="InterPro" id="IPR038340">
    <property type="entry name" value="MRP-L47_sf"/>
</dbReference>
<dbReference type="InterPro" id="IPR010729">
    <property type="entry name" value="Ribosomal_uL29_mit"/>
</dbReference>
<dbReference type="PANTHER" id="PTHR21183:SF18">
    <property type="entry name" value="LARGE RIBOSOMAL SUBUNIT PROTEIN UL29M"/>
    <property type="match status" value="1"/>
</dbReference>
<dbReference type="PANTHER" id="PTHR21183">
    <property type="entry name" value="RIBOSOMAL PROTEIN L47, MITOCHONDRIAL-RELATED"/>
    <property type="match status" value="1"/>
</dbReference>
<dbReference type="Pfam" id="PF06984">
    <property type="entry name" value="MRP-L47"/>
    <property type="match status" value="1"/>
</dbReference>
<gene>
    <name type="primary">MRPL4</name>
    <name type="ORF">PICST_90761</name>
</gene>
<feature type="transit peptide" description="Mitochondrion" evidence="2">
    <location>
        <begin position="1"/>
        <end status="unknown"/>
    </location>
</feature>
<feature type="chain" id="PRO_0000372410" description="Large ribosomal subunit protein uL29m">
    <location>
        <begin status="unknown"/>
        <end position="299"/>
    </location>
</feature>
<accession>A3LYY9</accession>
<protein>
    <recommendedName>
        <fullName evidence="3">Large ribosomal subunit protein uL29m</fullName>
    </recommendedName>
    <alternativeName>
        <fullName>54S ribosomal protein L4, mitochondrial</fullName>
    </alternativeName>
</protein>
<keyword id="KW-0496">Mitochondrion</keyword>
<keyword id="KW-1185">Reference proteome</keyword>
<keyword id="KW-0687">Ribonucleoprotein</keyword>
<keyword id="KW-0689">Ribosomal protein</keyword>
<keyword id="KW-0809">Transit peptide</keyword>
<comment type="subunit">
    <text evidence="1">Component of the mitochondrial large ribosomal subunit. Mature mitochondrial ribosomes consist of a small (37S) and a large (54S) subunit. The 37S subunit contains at least 33 different proteins and 1 molecule of RNA (15S). The 54S subunit contains at least 45 different proteins and 1 molecule of RNA (21S) (By similarity).</text>
</comment>
<comment type="subcellular location">
    <subcellularLocation>
        <location evidence="1">Mitochondrion</location>
    </subcellularLocation>
</comment>
<comment type="similarity">
    <text evidence="3">Belongs to the universal ribosomal protein uL29 family.</text>
</comment>
<sequence length="299" mass="35014">MSLRVSMRAFSLSSRVCARSGSKFSFGDLSKVKLRAPIIPTHKNFDVSPDHPLWAFFPEGNNTETALRSGDELDMNSREWTFAELRRKSFEDLHKLWYLTLKERNILAREVRLAESLRYSRTQQHDALDEKLVTVQKRIKQVLLERQVAHERVQTFTQQQQQYLTEFEERYLNASEHEIVSFNEKLVRLQYAFFGIEPQLQDYDLEDINIKFVEGLSFVANLKVKRYLKQNPAQEQEFELPLNGVVEELPFLLRNVTEAIEEVKALRQSGESVKLDKIDVFPFLRSALSNAIEQEELDQ</sequence>
<name>RM04_PICST</name>
<organism>
    <name type="scientific">Scheffersomyces stipitis (strain ATCC 58785 / CBS 6054 / NBRC 10063 / NRRL Y-11545)</name>
    <name type="common">Yeast</name>
    <name type="synonym">Pichia stipitis</name>
    <dbReference type="NCBI Taxonomy" id="322104"/>
    <lineage>
        <taxon>Eukaryota</taxon>
        <taxon>Fungi</taxon>
        <taxon>Dikarya</taxon>
        <taxon>Ascomycota</taxon>
        <taxon>Saccharomycotina</taxon>
        <taxon>Pichiomycetes</taxon>
        <taxon>Debaryomycetaceae</taxon>
        <taxon>Scheffersomyces</taxon>
    </lineage>
</organism>
<evidence type="ECO:0000250" key="1"/>
<evidence type="ECO:0000255" key="2"/>
<evidence type="ECO:0000305" key="3"/>
<proteinExistence type="inferred from homology"/>